<protein>
    <recommendedName>
        <fullName>UPF0297 protein YbeA</fullName>
    </recommendedName>
</protein>
<evidence type="ECO:0000305" key="1"/>
<gene>
    <name type="primary">ybeA</name>
    <name type="ordered locus">LL0142</name>
    <name type="ORF">L141485</name>
</gene>
<proteinExistence type="inferred from homology"/>
<sequence length="88" mass="10169">MSFTDETVRFEFGDSDKKEIGETLVDVYNVLEAKGYNPINQIVGYVLSGDPAYIPRHDDARNKIRRFDRDDIVEELIKNYLKDNGVNL</sequence>
<name>YBEA_LACLA</name>
<keyword id="KW-1185">Reference proteome</keyword>
<reference key="1">
    <citation type="journal article" date="2001" name="Genome Res.">
        <title>The complete genome sequence of the lactic acid bacterium Lactococcus lactis ssp. lactis IL1403.</title>
        <authorList>
            <person name="Bolotin A."/>
            <person name="Wincker P."/>
            <person name="Mauger S."/>
            <person name="Jaillon O."/>
            <person name="Malarme K."/>
            <person name="Weissenbach J."/>
            <person name="Ehrlich S.D."/>
            <person name="Sorokin A."/>
        </authorList>
    </citation>
    <scope>NUCLEOTIDE SEQUENCE [LARGE SCALE GENOMIC DNA]</scope>
    <source>
        <strain>IL1403</strain>
    </source>
</reference>
<comment type="similarity">
    <text evidence="1">Belongs to the UPF0297 family.</text>
</comment>
<accession>Q9CJ64</accession>
<dbReference type="EMBL" id="AE005176">
    <property type="protein sequence ID" value="AAK04240.1"/>
    <property type="molecule type" value="Genomic_DNA"/>
</dbReference>
<dbReference type="PIR" id="F86642">
    <property type="entry name" value="F86642"/>
</dbReference>
<dbReference type="RefSeq" id="NP_266298.1">
    <property type="nucleotide sequence ID" value="NC_002662.1"/>
</dbReference>
<dbReference type="RefSeq" id="WP_003131820.1">
    <property type="nucleotide sequence ID" value="NC_002662.1"/>
</dbReference>
<dbReference type="SMR" id="Q9CJ64"/>
<dbReference type="PaxDb" id="272623-L141485"/>
<dbReference type="EnsemblBacteria" id="AAK04240">
    <property type="protein sequence ID" value="AAK04240"/>
    <property type="gene ID" value="L141485"/>
</dbReference>
<dbReference type="KEGG" id="lla:L141485"/>
<dbReference type="PATRIC" id="fig|272623.7.peg.157"/>
<dbReference type="eggNOG" id="COG4472">
    <property type="taxonomic scope" value="Bacteria"/>
</dbReference>
<dbReference type="HOGENOM" id="CLU_162466_0_0_9"/>
<dbReference type="OrthoDB" id="9796303at2"/>
<dbReference type="Proteomes" id="UP000002196">
    <property type="component" value="Chromosome"/>
</dbReference>
<dbReference type="HAMAP" id="MF_01507">
    <property type="entry name" value="UPF0297"/>
    <property type="match status" value="1"/>
</dbReference>
<dbReference type="InterPro" id="IPR009309">
    <property type="entry name" value="IreB"/>
</dbReference>
<dbReference type="NCBIfam" id="NF003997">
    <property type="entry name" value="PRK05473.1"/>
    <property type="match status" value="1"/>
</dbReference>
<dbReference type="PANTHER" id="PTHR40067">
    <property type="entry name" value="UPF0297 PROTEIN YRZL"/>
    <property type="match status" value="1"/>
</dbReference>
<dbReference type="PANTHER" id="PTHR40067:SF1">
    <property type="entry name" value="UPF0297 PROTEIN YRZL"/>
    <property type="match status" value="1"/>
</dbReference>
<dbReference type="Pfam" id="PF06135">
    <property type="entry name" value="IreB"/>
    <property type="match status" value="1"/>
</dbReference>
<dbReference type="PIRSF" id="PIRSF037258">
    <property type="entry name" value="DUF965_bac"/>
    <property type="match status" value="1"/>
</dbReference>
<organism>
    <name type="scientific">Lactococcus lactis subsp. lactis (strain IL1403)</name>
    <name type="common">Streptococcus lactis</name>
    <dbReference type="NCBI Taxonomy" id="272623"/>
    <lineage>
        <taxon>Bacteria</taxon>
        <taxon>Bacillati</taxon>
        <taxon>Bacillota</taxon>
        <taxon>Bacilli</taxon>
        <taxon>Lactobacillales</taxon>
        <taxon>Streptococcaceae</taxon>
        <taxon>Lactococcus</taxon>
    </lineage>
</organism>
<feature type="chain" id="PRO_0000216972" description="UPF0297 protein YbeA">
    <location>
        <begin position="1"/>
        <end position="88"/>
    </location>
</feature>